<comment type="function">
    <text evidence="1">Site-specific tyrosine recombinase, which acts by catalyzing the cutting and rejoining of the recombining DNA molecules. The XerC-XerD complex is essential to convert dimers of the bacterial chromosome into monomers to permit their segregation at cell division. It also contributes to the segregational stability of plasmids.</text>
</comment>
<comment type="subunit">
    <text evidence="1">Forms a cyclic heterotetrameric complex composed of two molecules of XerC and two molecules of XerD.</text>
</comment>
<comment type="subcellular location">
    <subcellularLocation>
        <location evidence="1">Cytoplasm</location>
    </subcellularLocation>
</comment>
<comment type="similarity">
    <text evidence="1">Belongs to the 'phage' integrase family. XerC subfamily.</text>
</comment>
<evidence type="ECO:0000255" key="1">
    <source>
        <dbReference type="HAMAP-Rule" id="MF_01808"/>
    </source>
</evidence>
<evidence type="ECO:0000255" key="2">
    <source>
        <dbReference type="PROSITE-ProRule" id="PRU01246"/>
    </source>
</evidence>
<evidence type="ECO:0000255" key="3">
    <source>
        <dbReference type="PROSITE-ProRule" id="PRU01248"/>
    </source>
</evidence>
<sequence>MTGGVPSLGFACQPDAAEALERWGRWLEHERGASTHTLRSYRADLAGFLAFVAEHRGRPPGLNDLGALDLGAFRAWLAARAADGAGAATRSRGVSGVRSFFRWADRSGLLHNPAIALLTAPKAQRPLPRPLAADDAALLLEEAAAVPEAPWIGLRDRALFTLLYGCGLRISEAIGLNRSDLPAGAASVRVLGKGGKQRDVPVLPAVREAVAAYLAAVPWGGGRAAPLFVGAKGDRLSPDVARRQMRHLRALLGLPDSTTPHALRHSFATHLLGGGADLRAIQDLLGHASLSTTQRYTDVDAEHLLSVYETAHPRARRQGHQTVRSVCDALPPRLRNQESER</sequence>
<organism>
    <name type="scientific">Rhodospirillum centenum (strain ATCC 51521 / SW)</name>
    <dbReference type="NCBI Taxonomy" id="414684"/>
    <lineage>
        <taxon>Bacteria</taxon>
        <taxon>Pseudomonadati</taxon>
        <taxon>Pseudomonadota</taxon>
        <taxon>Alphaproteobacteria</taxon>
        <taxon>Rhodospirillales</taxon>
        <taxon>Rhodospirillaceae</taxon>
        <taxon>Rhodospirillum</taxon>
    </lineage>
</organism>
<dbReference type="EMBL" id="CP000613">
    <property type="protein sequence ID" value="ACI99644.1"/>
    <property type="molecule type" value="Genomic_DNA"/>
</dbReference>
<dbReference type="RefSeq" id="WP_012567429.1">
    <property type="nucleotide sequence ID" value="NC_011420.2"/>
</dbReference>
<dbReference type="SMR" id="B6IPE2"/>
<dbReference type="STRING" id="414684.RC1_2257"/>
<dbReference type="KEGG" id="rce:RC1_2257"/>
<dbReference type="eggNOG" id="COG4974">
    <property type="taxonomic scope" value="Bacteria"/>
</dbReference>
<dbReference type="HOGENOM" id="CLU_027562_9_0_5"/>
<dbReference type="OrthoDB" id="9801717at2"/>
<dbReference type="Proteomes" id="UP000001591">
    <property type="component" value="Chromosome"/>
</dbReference>
<dbReference type="GO" id="GO:0005737">
    <property type="term" value="C:cytoplasm"/>
    <property type="evidence" value="ECO:0007669"/>
    <property type="project" value="UniProtKB-SubCell"/>
</dbReference>
<dbReference type="GO" id="GO:0003677">
    <property type="term" value="F:DNA binding"/>
    <property type="evidence" value="ECO:0007669"/>
    <property type="project" value="UniProtKB-KW"/>
</dbReference>
<dbReference type="GO" id="GO:0009037">
    <property type="term" value="F:tyrosine-based site-specific recombinase activity"/>
    <property type="evidence" value="ECO:0007669"/>
    <property type="project" value="UniProtKB-UniRule"/>
</dbReference>
<dbReference type="GO" id="GO:0051301">
    <property type="term" value="P:cell division"/>
    <property type="evidence" value="ECO:0007669"/>
    <property type="project" value="UniProtKB-KW"/>
</dbReference>
<dbReference type="GO" id="GO:0007059">
    <property type="term" value="P:chromosome segregation"/>
    <property type="evidence" value="ECO:0007669"/>
    <property type="project" value="UniProtKB-UniRule"/>
</dbReference>
<dbReference type="GO" id="GO:0006313">
    <property type="term" value="P:DNA transposition"/>
    <property type="evidence" value="ECO:0007669"/>
    <property type="project" value="UniProtKB-UniRule"/>
</dbReference>
<dbReference type="CDD" id="cd00798">
    <property type="entry name" value="INT_XerDC_C"/>
    <property type="match status" value="1"/>
</dbReference>
<dbReference type="Gene3D" id="1.10.150.130">
    <property type="match status" value="1"/>
</dbReference>
<dbReference type="Gene3D" id="1.10.443.10">
    <property type="entry name" value="Intergrase catalytic core"/>
    <property type="match status" value="1"/>
</dbReference>
<dbReference type="HAMAP" id="MF_01808">
    <property type="entry name" value="Recomb_XerC_XerD"/>
    <property type="match status" value="1"/>
</dbReference>
<dbReference type="InterPro" id="IPR044068">
    <property type="entry name" value="CB"/>
</dbReference>
<dbReference type="InterPro" id="IPR011010">
    <property type="entry name" value="DNA_brk_join_enz"/>
</dbReference>
<dbReference type="InterPro" id="IPR013762">
    <property type="entry name" value="Integrase-like_cat_sf"/>
</dbReference>
<dbReference type="InterPro" id="IPR002104">
    <property type="entry name" value="Integrase_catalytic"/>
</dbReference>
<dbReference type="InterPro" id="IPR010998">
    <property type="entry name" value="Integrase_recombinase_N"/>
</dbReference>
<dbReference type="InterPro" id="IPR004107">
    <property type="entry name" value="Integrase_SAM-like_N"/>
</dbReference>
<dbReference type="InterPro" id="IPR023009">
    <property type="entry name" value="Tyrosine_recombinase_XerC/XerD"/>
</dbReference>
<dbReference type="InterPro" id="IPR050090">
    <property type="entry name" value="Tyrosine_recombinase_XerCD"/>
</dbReference>
<dbReference type="PANTHER" id="PTHR30349">
    <property type="entry name" value="PHAGE INTEGRASE-RELATED"/>
    <property type="match status" value="1"/>
</dbReference>
<dbReference type="PANTHER" id="PTHR30349:SF90">
    <property type="entry name" value="TYROSINE RECOMBINASE XERD"/>
    <property type="match status" value="1"/>
</dbReference>
<dbReference type="Pfam" id="PF02899">
    <property type="entry name" value="Phage_int_SAM_1"/>
    <property type="match status" value="1"/>
</dbReference>
<dbReference type="Pfam" id="PF00589">
    <property type="entry name" value="Phage_integrase"/>
    <property type="match status" value="1"/>
</dbReference>
<dbReference type="SUPFAM" id="SSF56349">
    <property type="entry name" value="DNA breaking-rejoining enzymes"/>
    <property type="match status" value="1"/>
</dbReference>
<dbReference type="SUPFAM" id="SSF47823">
    <property type="entry name" value="lambda integrase-like, N-terminal domain"/>
    <property type="match status" value="1"/>
</dbReference>
<dbReference type="PROSITE" id="PS51900">
    <property type="entry name" value="CB"/>
    <property type="match status" value="1"/>
</dbReference>
<dbReference type="PROSITE" id="PS51898">
    <property type="entry name" value="TYR_RECOMBINASE"/>
    <property type="match status" value="1"/>
</dbReference>
<keyword id="KW-0131">Cell cycle</keyword>
<keyword id="KW-0132">Cell division</keyword>
<keyword id="KW-0159">Chromosome partition</keyword>
<keyword id="KW-0963">Cytoplasm</keyword>
<keyword id="KW-0229">DNA integration</keyword>
<keyword id="KW-0233">DNA recombination</keyword>
<keyword id="KW-0238">DNA-binding</keyword>
<keyword id="KW-1185">Reference proteome</keyword>
<reference key="1">
    <citation type="submission" date="2007-03" db="EMBL/GenBank/DDBJ databases">
        <title>Genome sequence of Rhodospirillum centenum.</title>
        <authorList>
            <person name="Touchman J.W."/>
            <person name="Bauer C."/>
            <person name="Blankenship R.E."/>
        </authorList>
    </citation>
    <scope>NUCLEOTIDE SEQUENCE [LARGE SCALE GENOMIC DNA]</scope>
    <source>
        <strain>ATCC 51521 / SW</strain>
    </source>
</reference>
<feature type="chain" id="PRO_1000215957" description="Tyrosine recombinase XerC">
    <location>
        <begin position="1"/>
        <end position="341"/>
    </location>
</feature>
<feature type="domain" description="Core-binding (CB)" evidence="3">
    <location>
        <begin position="14"/>
        <end position="105"/>
    </location>
</feature>
<feature type="domain" description="Tyr recombinase" evidence="2">
    <location>
        <begin position="126"/>
        <end position="309"/>
    </location>
</feature>
<feature type="active site" evidence="1">
    <location>
        <position position="169"/>
    </location>
</feature>
<feature type="active site" evidence="1">
    <location>
        <position position="193"/>
    </location>
</feature>
<feature type="active site" evidence="1">
    <location>
        <position position="261"/>
    </location>
</feature>
<feature type="active site" evidence="1">
    <location>
        <position position="264"/>
    </location>
</feature>
<feature type="active site" evidence="1">
    <location>
        <position position="287"/>
    </location>
</feature>
<feature type="active site" description="O-(3'-phospho-DNA)-tyrosine intermediate" evidence="1">
    <location>
        <position position="296"/>
    </location>
</feature>
<accession>B6IPE2</accession>
<name>XERC_RHOCS</name>
<protein>
    <recommendedName>
        <fullName evidence="1">Tyrosine recombinase XerC</fullName>
    </recommendedName>
</protein>
<proteinExistence type="inferred from homology"/>
<gene>
    <name evidence="1" type="primary">xerC</name>
    <name type="ordered locus">RC1_2257</name>
</gene>